<gene>
    <name type="primary">hupT</name>
</gene>
<evidence type="ECO:0000305" key="1"/>
<proteinExistence type="inferred from homology"/>
<dbReference type="EMBL" id="L25315">
    <property type="protein sequence ID" value="AAA64453.1"/>
    <property type="molecule type" value="Genomic_DNA"/>
</dbReference>
<dbReference type="PIR" id="S53662">
    <property type="entry name" value="S53662"/>
</dbReference>
<dbReference type="SMR" id="Q43958"/>
<dbReference type="Gene3D" id="3.30.1460.40">
    <property type="entry name" value="[NiFe]-hydrogenase assembly chaperone, HybE"/>
    <property type="match status" value="1"/>
</dbReference>
<dbReference type="InterPro" id="IPR023994">
    <property type="entry name" value="NiFe-hyd_HybE"/>
</dbReference>
<dbReference type="InterPro" id="IPR038530">
    <property type="entry name" value="NiFe-hyd_HybE_sf"/>
</dbReference>
<dbReference type="NCBIfam" id="TIGR03993">
    <property type="entry name" value="hydrog_HybE"/>
    <property type="match status" value="1"/>
</dbReference>
<dbReference type="Pfam" id="PF11939">
    <property type="entry name" value="NiFe-hyd_HybE"/>
    <property type="match status" value="1"/>
</dbReference>
<protein>
    <recommendedName>
        <fullName>Hydrogenase expression/formation protein HupT</fullName>
    </recommendedName>
</protein>
<accession>Q43958</accession>
<comment type="similarity">
    <text evidence="1">Belongs to the HupJ family.</text>
</comment>
<name>HUPT_AZOCH</name>
<reference key="1">
    <citation type="journal article" date="1994" name="J. Mol. Biol.">
        <title>Sequences, organization and analysis of the hupZMNOQRTV genes from the Azotobacter chroococcum hydrogenase gene cluster.</title>
        <authorList>
            <person name="Du L."/>
            <person name="Tibelius K.H."/>
            <person name="Souza E.M."/>
            <person name="Garg R.P."/>
            <person name="Yates M.G."/>
        </authorList>
    </citation>
    <scope>NUCLEOTIDE SEQUENCE [GENOMIC DNA]</scope>
</reference>
<feature type="chain" id="PRO_0000201422" description="Hydrogenase expression/formation protein HupT">
    <location>
        <begin position="1"/>
        <end position="149"/>
    </location>
</feature>
<organism>
    <name type="scientific">Azotobacter chroococcum mcd 1</name>
    <dbReference type="NCBI Taxonomy" id="355"/>
    <lineage>
        <taxon>Bacteria</taxon>
        <taxon>Pseudomonadati</taxon>
        <taxon>Pseudomonadota</taxon>
        <taxon>Gammaproteobacteria</taxon>
        <taxon>Pseudomonadales</taxon>
        <taxon>Pseudomonadaceae</taxon>
        <taxon>Azotobacter</taxon>
    </lineage>
</organism>
<sequence length="149" mass="16219">MHSREAIEAYYRAVGTRMAGLPVYNPALAVELLGWRAVEGVGALGVLITPWCMNLFWQPPAEAELPTKGERAVLSLPSGDYECTLHEDESLGRYASASLCSPMQDFPDQAGARAMAEEVLRLVFAESEPPQPAQLTRRALFRRALGGAS</sequence>